<proteinExistence type="evidence at transcript level"/>
<comment type="function">
    <text>PLA2 catalyzes the calcium-dependent hydrolysis of the 2-acyl groups in 3-sn-phosphoglycerides.</text>
</comment>
<comment type="catalytic activity">
    <reaction evidence="3 4">
        <text>a 1,2-diacyl-sn-glycero-3-phosphocholine + H2O = a 1-acyl-sn-glycero-3-phosphocholine + a fatty acid + H(+)</text>
        <dbReference type="Rhea" id="RHEA:15801"/>
        <dbReference type="ChEBI" id="CHEBI:15377"/>
        <dbReference type="ChEBI" id="CHEBI:15378"/>
        <dbReference type="ChEBI" id="CHEBI:28868"/>
        <dbReference type="ChEBI" id="CHEBI:57643"/>
        <dbReference type="ChEBI" id="CHEBI:58168"/>
        <dbReference type="EC" id="3.1.1.4"/>
    </reaction>
</comment>
<comment type="cofactor">
    <cofactor evidence="1">
        <name>Ca(2+)</name>
        <dbReference type="ChEBI" id="CHEBI:29108"/>
    </cofactor>
    <text evidence="1">Binds 1 Ca(2+) ion.</text>
</comment>
<comment type="subcellular location">
    <subcellularLocation>
        <location>Secreted</location>
    </subcellularLocation>
</comment>
<comment type="tissue specificity">
    <text>Expressed by the venom gland.</text>
</comment>
<comment type="similarity">
    <text evidence="5">Belongs to the phospholipase A2 family. Group I subfamily. D49 sub-subfamily.</text>
</comment>
<organism>
    <name type="scientific">Tropidechis carinatus</name>
    <name type="common">Australian rough-scaled snake</name>
    <dbReference type="NCBI Taxonomy" id="100989"/>
    <lineage>
        <taxon>Eukaryota</taxon>
        <taxon>Metazoa</taxon>
        <taxon>Chordata</taxon>
        <taxon>Craniata</taxon>
        <taxon>Vertebrata</taxon>
        <taxon>Euteleostomi</taxon>
        <taxon>Lepidosauria</taxon>
        <taxon>Squamata</taxon>
        <taxon>Bifurcata</taxon>
        <taxon>Unidentata</taxon>
        <taxon>Episquamata</taxon>
        <taxon>Toxicofera</taxon>
        <taxon>Serpentes</taxon>
        <taxon>Colubroidea</taxon>
        <taxon>Elapidae</taxon>
        <taxon>Notechinae</taxon>
        <taxon>Tropidechis</taxon>
    </lineage>
</organism>
<feature type="signal peptide" evidence="2">
    <location>
        <begin position="1"/>
        <end position="27"/>
    </location>
</feature>
<feature type="chain" id="PRO_0000043278" description="Acidic phospholipase A2 3">
    <location>
        <begin position="28"/>
        <end position="151"/>
    </location>
</feature>
<feature type="active site" evidence="1">
    <location>
        <position position="75"/>
    </location>
</feature>
<feature type="active site" evidence="1">
    <location>
        <position position="126"/>
    </location>
</feature>
<feature type="binding site" evidence="1">
    <location>
        <position position="55"/>
    </location>
    <ligand>
        <name>Ca(2+)</name>
        <dbReference type="ChEBI" id="CHEBI:29108"/>
    </ligand>
</feature>
<feature type="binding site" evidence="1">
    <location>
        <position position="57"/>
    </location>
    <ligand>
        <name>Ca(2+)</name>
        <dbReference type="ChEBI" id="CHEBI:29108"/>
    </ligand>
</feature>
<feature type="binding site" evidence="1">
    <location>
        <position position="59"/>
    </location>
    <ligand>
        <name>Ca(2+)</name>
        <dbReference type="ChEBI" id="CHEBI:29108"/>
    </ligand>
</feature>
<feature type="binding site" evidence="1">
    <location>
        <position position="76"/>
    </location>
    <ligand>
        <name>Ca(2+)</name>
        <dbReference type="ChEBI" id="CHEBI:29108"/>
    </ligand>
</feature>
<feature type="disulfide bond" evidence="1">
    <location>
        <begin position="38"/>
        <end position="104"/>
    </location>
</feature>
<feature type="disulfide bond" evidence="1">
    <location>
        <begin position="54"/>
        <end position="151"/>
    </location>
</feature>
<feature type="disulfide bond" evidence="1">
    <location>
        <begin position="56"/>
        <end position="72"/>
    </location>
</feature>
<feature type="disulfide bond" evidence="1">
    <location>
        <begin position="71"/>
        <end position="132"/>
    </location>
</feature>
<feature type="disulfide bond" evidence="1">
    <location>
        <begin position="78"/>
        <end position="125"/>
    </location>
</feature>
<feature type="disulfide bond" evidence="1">
    <location>
        <begin position="88"/>
        <end position="118"/>
    </location>
</feature>
<feature type="disulfide bond" evidence="1">
    <location>
        <begin position="111"/>
        <end position="123"/>
    </location>
</feature>
<keyword id="KW-0106">Calcium</keyword>
<keyword id="KW-1015">Disulfide bond</keyword>
<keyword id="KW-0378">Hydrolase</keyword>
<keyword id="KW-0442">Lipid degradation</keyword>
<keyword id="KW-0443">Lipid metabolism</keyword>
<keyword id="KW-0479">Metal-binding</keyword>
<keyword id="KW-0964">Secreted</keyword>
<keyword id="KW-0732">Signal</keyword>
<keyword id="KW-0800">Toxin</keyword>
<evidence type="ECO:0000250" key="1"/>
<evidence type="ECO:0000255" key="2"/>
<evidence type="ECO:0000255" key="3">
    <source>
        <dbReference type="PROSITE-ProRule" id="PRU10035"/>
    </source>
</evidence>
<evidence type="ECO:0000255" key="4">
    <source>
        <dbReference type="PROSITE-ProRule" id="PRU10036"/>
    </source>
</evidence>
<evidence type="ECO:0000305" key="5"/>
<reference key="1">
    <citation type="journal article" date="2005" name="Cell. Mol. Life Sci.">
        <title>Identification and analysis of venom gland-specific genes from the coastal taipan (Oxyuranus scutellatus) and related species.</title>
        <authorList>
            <person name="St Pierre L."/>
            <person name="Woods R."/>
            <person name="Earl S.T.H."/>
            <person name="Masci P.P."/>
            <person name="Lavin M.F."/>
        </authorList>
    </citation>
    <scope>NUCLEOTIDE SEQUENCE [MRNA]</scope>
    <source>
        <tissue>Venom gland</tissue>
    </source>
</reference>
<sequence length="151" mass="16932">MYPAHLLVLLAVCVSLLGAASIPARPLNLYQFGNMIQCANHGRRPTRHYMDYGCYCGKGGSGTPVDELDRCCQIHDDCYGEAEKLPACNYMMSGPYYNTYSYECNDGELTCKDNNDECKAFICNCDRTAAICFARTPYNDANWNINTKTRC</sequence>
<dbReference type="EC" id="3.1.1.4"/>
<dbReference type="EMBL" id="DQ085838">
    <property type="protein sequence ID" value="AAZ22656.1"/>
    <property type="molecule type" value="mRNA"/>
</dbReference>
<dbReference type="SMR" id="Q45Z28"/>
<dbReference type="GO" id="GO:0005576">
    <property type="term" value="C:extracellular region"/>
    <property type="evidence" value="ECO:0007669"/>
    <property type="project" value="UniProtKB-SubCell"/>
</dbReference>
<dbReference type="GO" id="GO:0005509">
    <property type="term" value="F:calcium ion binding"/>
    <property type="evidence" value="ECO:0007669"/>
    <property type="project" value="InterPro"/>
</dbReference>
<dbReference type="GO" id="GO:0047498">
    <property type="term" value="F:calcium-dependent phospholipase A2 activity"/>
    <property type="evidence" value="ECO:0007669"/>
    <property type="project" value="TreeGrafter"/>
</dbReference>
<dbReference type="GO" id="GO:0005543">
    <property type="term" value="F:phospholipid binding"/>
    <property type="evidence" value="ECO:0007669"/>
    <property type="project" value="TreeGrafter"/>
</dbReference>
<dbReference type="GO" id="GO:0005102">
    <property type="term" value="F:signaling receptor binding"/>
    <property type="evidence" value="ECO:0007669"/>
    <property type="project" value="TreeGrafter"/>
</dbReference>
<dbReference type="GO" id="GO:0090729">
    <property type="term" value="F:toxin activity"/>
    <property type="evidence" value="ECO:0007669"/>
    <property type="project" value="UniProtKB-KW"/>
</dbReference>
<dbReference type="GO" id="GO:0050482">
    <property type="term" value="P:arachidonate secretion"/>
    <property type="evidence" value="ECO:0007669"/>
    <property type="project" value="InterPro"/>
</dbReference>
<dbReference type="GO" id="GO:0006633">
    <property type="term" value="P:fatty acid biosynthetic process"/>
    <property type="evidence" value="ECO:0007669"/>
    <property type="project" value="TreeGrafter"/>
</dbReference>
<dbReference type="GO" id="GO:0016042">
    <property type="term" value="P:lipid catabolic process"/>
    <property type="evidence" value="ECO:0007669"/>
    <property type="project" value="UniProtKB-KW"/>
</dbReference>
<dbReference type="GO" id="GO:0006644">
    <property type="term" value="P:phospholipid metabolic process"/>
    <property type="evidence" value="ECO:0007669"/>
    <property type="project" value="InterPro"/>
</dbReference>
<dbReference type="GO" id="GO:0048146">
    <property type="term" value="P:positive regulation of fibroblast proliferation"/>
    <property type="evidence" value="ECO:0007669"/>
    <property type="project" value="TreeGrafter"/>
</dbReference>
<dbReference type="CDD" id="cd00125">
    <property type="entry name" value="PLA2c"/>
    <property type="match status" value="1"/>
</dbReference>
<dbReference type="FunFam" id="1.20.90.10:FF:000007">
    <property type="entry name" value="Acidic phospholipase A2"/>
    <property type="match status" value="1"/>
</dbReference>
<dbReference type="Gene3D" id="1.20.90.10">
    <property type="entry name" value="Phospholipase A2 domain"/>
    <property type="match status" value="1"/>
</dbReference>
<dbReference type="InterPro" id="IPR001211">
    <property type="entry name" value="PLipase_A2"/>
</dbReference>
<dbReference type="InterPro" id="IPR033112">
    <property type="entry name" value="PLipase_A2_Asp_AS"/>
</dbReference>
<dbReference type="InterPro" id="IPR016090">
    <property type="entry name" value="PLipase_A2_dom"/>
</dbReference>
<dbReference type="InterPro" id="IPR036444">
    <property type="entry name" value="PLipase_A2_dom_sf"/>
</dbReference>
<dbReference type="InterPro" id="IPR033113">
    <property type="entry name" value="PLipase_A2_His_AS"/>
</dbReference>
<dbReference type="PANTHER" id="PTHR11716:SF94">
    <property type="entry name" value="PHOSPHOLIPASE A2"/>
    <property type="match status" value="1"/>
</dbReference>
<dbReference type="PANTHER" id="PTHR11716">
    <property type="entry name" value="PHOSPHOLIPASE A2 FAMILY MEMBER"/>
    <property type="match status" value="1"/>
</dbReference>
<dbReference type="Pfam" id="PF00068">
    <property type="entry name" value="Phospholip_A2_1"/>
    <property type="match status" value="1"/>
</dbReference>
<dbReference type="PRINTS" id="PR00389">
    <property type="entry name" value="PHPHLIPASEA2"/>
</dbReference>
<dbReference type="SMART" id="SM00085">
    <property type="entry name" value="PA2c"/>
    <property type="match status" value="1"/>
</dbReference>
<dbReference type="SUPFAM" id="SSF48619">
    <property type="entry name" value="Phospholipase A2, PLA2"/>
    <property type="match status" value="1"/>
</dbReference>
<dbReference type="PROSITE" id="PS00119">
    <property type="entry name" value="PA2_ASP"/>
    <property type="match status" value="1"/>
</dbReference>
<dbReference type="PROSITE" id="PS00118">
    <property type="entry name" value="PA2_HIS"/>
    <property type="match status" value="1"/>
</dbReference>
<accession>Q45Z28</accession>
<name>PA2A3_TROCA</name>
<protein>
    <recommendedName>
        <fullName>Acidic phospholipase A2 3</fullName>
        <shortName>svPLA2</shortName>
        <ecNumber>3.1.1.4</ecNumber>
    </recommendedName>
    <alternativeName>
        <fullName>Phosphatidylcholine 2-acylhydrolase 3</fullName>
        <shortName>PLA-3</shortName>
    </alternativeName>
</protein>